<dbReference type="EC" id="2.1.2.3" evidence="1"/>
<dbReference type="EC" id="3.5.4.10" evidence="1"/>
<dbReference type="EMBL" id="CP000901">
    <property type="protein sequence ID" value="ABX85892.1"/>
    <property type="molecule type" value="Genomic_DNA"/>
</dbReference>
<dbReference type="RefSeq" id="WP_002210692.1">
    <property type="nucleotide sequence ID" value="NZ_CP009935.1"/>
</dbReference>
<dbReference type="SMR" id="A9R8E1"/>
<dbReference type="GeneID" id="57974989"/>
<dbReference type="KEGG" id="ypg:YpAngola_A0465"/>
<dbReference type="PATRIC" id="fig|349746.12.peg.1421"/>
<dbReference type="UniPathway" id="UPA00074">
    <property type="reaction ID" value="UER00133"/>
</dbReference>
<dbReference type="UniPathway" id="UPA00074">
    <property type="reaction ID" value="UER00135"/>
</dbReference>
<dbReference type="GO" id="GO:0005829">
    <property type="term" value="C:cytosol"/>
    <property type="evidence" value="ECO:0007669"/>
    <property type="project" value="TreeGrafter"/>
</dbReference>
<dbReference type="GO" id="GO:0003937">
    <property type="term" value="F:IMP cyclohydrolase activity"/>
    <property type="evidence" value="ECO:0007669"/>
    <property type="project" value="UniProtKB-UniRule"/>
</dbReference>
<dbReference type="GO" id="GO:0004643">
    <property type="term" value="F:phosphoribosylaminoimidazolecarboxamide formyltransferase activity"/>
    <property type="evidence" value="ECO:0007669"/>
    <property type="project" value="UniProtKB-UniRule"/>
</dbReference>
<dbReference type="GO" id="GO:0006189">
    <property type="term" value="P:'de novo' IMP biosynthetic process"/>
    <property type="evidence" value="ECO:0007669"/>
    <property type="project" value="UniProtKB-UniRule"/>
</dbReference>
<dbReference type="CDD" id="cd01421">
    <property type="entry name" value="IMPCH"/>
    <property type="match status" value="1"/>
</dbReference>
<dbReference type="FunFam" id="3.40.140.20:FF:000001">
    <property type="entry name" value="Bifunctional purine biosynthesis protein PurH"/>
    <property type="match status" value="1"/>
</dbReference>
<dbReference type="FunFam" id="3.40.140.20:FF:000002">
    <property type="entry name" value="Bifunctional purine biosynthesis protein PurH"/>
    <property type="match status" value="1"/>
</dbReference>
<dbReference type="FunFam" id="3.40.50.1380:FF:000001">
    <property type="entry name" value="Bifunctional purine biosynthesis protein PurH"/>
    <property type="match status" value="1"/>
</dbReference>
<dbReference type="Gene3D" id="3.40.140.20">
    <property type="match status" value="2"/>
</dbReference>
<dbReference type="Gene3D" id="3.40.50.1380">
    <property type="entry name" value="Methylglyoxal synthase-like domain"/>
    <property type="match status" value="1"/>
</dbReference>
<dbReference type="HAMAP" id="MF_00139">
    <property type="entry name" value="PurH"/>
    <property type="match status" value="1"/>
</dbReference>
<dbReference type="InterPro" id="IPR024051">
    <property type="entry name" value="AICAR_Tfase_dup_dom_sf"/>
</dbReference>
<dbReference type="InterPro" id="IPR016193">
    <property type="entry name" value="Cytidine_deaminase-like"/>
</dbReference>
<dbReference type="InterPro" id="IPR011607">
    <property type="entry name" value="MGS-like_dom"/>
</dbReference>
<dbReference type="InterPro" id="IPR036914">
    <property type="entry name" value="MGS-like_dom_sf"/>
</dbReference>
<dbReference type="InterPro" id="IPR002695">
    <property type="entry name" value="PurH-like"/>
</dbReference>
<dbReference type="NCBIfam" id="NF002049">
    <property type="entry name" value="PRK00881.1"/>
    <property type="match status" value="1"/>
</dbReference>
<dbReference type="NCBIfam" id="TIGR00355">
    <property type="entry name" value="purH"/>
    <property type="match status" value="1"/>
</dbReference>
<dbReference type="PANTHER" id="PTHR11692:SF0">
    <property type="entry name" value="BIFUNCTIONAL PURINE BIOSYNTHESIS PROTEIN ATIC"/>
    <property type="match status" value="1"/>
</dbReference>
<dbReference type="PANTHER" id="PTHR11692">
    <property type="entry name" value="BIFUNCTIONAL PURINE BIOSYNTHESIS PROTEIN PURH"/>
    <property type="match status" value="1"/>
</dbReference>
<dbReference type="Pfam" id="PF01808">
    <property type="entry name" value="AICARFT_IMPCHas"/>
    <property type="match status" value="1"/>
</dbReference>
<dbReference type="Pfam" id="PF02142">
    <property type="entry name" value="MGS"/>
    <property type="match status" value="1"/>
</dbReference>
<dbReference type="PIRSF" id="PIRSF000414">
    <property type="entry name" value="AICARFT_IMPCHas"/>
    <property type="match status" value="1"/>
</dbReference>
<dbReference type="SMART" id="SM00798">
    <property type="entry name" value="AICARFT_IMPCHas"/>
    <property type="match status" value="1"/>
</dbReference>
<dbReference type="SMART" id="SM00851">
    <property type="entry name" value="MGS"/>
    <property type="match status" value="1"/>
</dbReference>
<dbReference type="SUPFAM" id="SSF53927">
    <property type="entry name" value="Cytidine deaminase-like"/>
    <property type="match status" value="1"/>
</dbReference>
<dbReference type="SUPFAM" id="SSF52335">
    <property type="entry name" value="Methylglyoxal synthase-like"/>
    <property type="match status" value="1"/>
</dbReference>
<dbReference type="PROSITE" id="PS51855">
    <property type="entry name" value="MGS"/>
    <property type="match status" value="1"/>
</dbReference>
<organism>
    <name type="scientific">Yersinia pestis bv. Antiqua (strain Angola)</name>
    <dbReference type="NCBI Taxonomy" id="349746"/>
    <lineage>
        <taxon>Bacteria</taxon>
        <taxon>Pseudomonadati</taxon>
        <taxon>Pseudomonadota</taxon>
        <taxon>Gammaproteobacteria</taxon>
        <taxon>Enterobacterales</taxon>
        <taxon>Yersiniaceae</taxon>
        <taxon>Yersinia</taxon>
    </lineage>
</organism>
<name>PUR9_YERPG</name>
<accession>A9R8E1</accession>
<feature type="chain" id="PRO_1000096112" description="Bifunctional purine biosynthesis protein PurH">
    <location>
        <begin position="1"/>
        <end position="529"/>
    </location>
</feature>
<feature type="domain" description="MGS-like" evidence="2">
    <location>
        <begin position="1"/>
        <end position="148"/>
    </location>
</feature>
<sequence>MQQRRPIRRALLSVSDKAGIIEFAQALSQRGIELLSTGGTARLLADAGLPVTEVSDYTGFPEMMDGRVKTLHPKVHGGILGRRGQDDGIMAQHGIQPIDIVVVNLYPFAQTVARPDCSLEDAVENIDIGGPTMVRSAAKNHKDVAIVVKSSDYPAIITELDNNDGSLTYPTRFNLAIKAFEHTAAYDSMIANYFGTLVPPYHGDTEQPSGHFPRTLNLNYIKKQDMRYGENSHQQAAFYIEEDVKEASVATAQQLQGKALSYNNIADTDAALECVKEFSEPACVIVKHANPCGVAIGDSILAAYERAYQTDPTSAFGGIIAFNRELDAATASAIISRQFVEVIIAPTVSSDALALLAAKQNVRVLTCGQWQARSAGLDFKRVNGGLLVQERDLGMVTAADLRVVSKRQPTEQELRDALFCWKVAKFVKSNAIVYARDNMTIGIGAGQMSRVYSAKIAGIKAADEGLEVAGSAMASDAFFPFRDGIDAAAAVGITCVIQPGGSIRDDEVIAAADEHSIAMIFTDMRHFRH</sequence>
<keyword id="KW-0378">Hydrolase</keyword>
<keyword id="KW-0511">Multifunctional enzyme</keyword>
<keyword id="KW-0658">Purine biosynthesis</keyword>
<keyword id="KW-0808">Transferase</keyword>
<evidence type="ECO:0000255" key="1">
    <source>
        <dbReference type="HAMAP-Rule" id="MF_00139"/>
    </source>
</evidence>
<evidence type="ECO:0000255" key="2">
    <source>
        <dbReference type="PROSITE-ProRule" id="PRU01202"/>
    </source>
</evidence>
<protein>
    <recommendedName>
        <fullName evidence="1">Bifunctional purine biosynthesis protein PurH</fullName>
    </recommendedName>
    <domain>
        <recommendedName>
            <fullName evidence="1">Phosphoribosylaminoimidazolecarboxamide formyltransferase</fullName>
            <ecNumber evidence="1">2.1.2.3</ecNumber>
        </recommendedName>
        <alternativeName>
            <fullName evidence="1">AICAR transformylase</fullName>
        </alternativeName>
    </domain>
    <domain>
        <recommendedName>
            <fullName evidence="1">IMP cyclohydrolase</fullName>
            <ecNumber evidence="1">3.5.4.10</ecNumber>
        </recommendedName>
        <alternativeName>
            <fullName evidence="1">ATIC</fullName>
        </alternativeName>
        <alternativeName>
            <fullName evidence="1">IMP synthase</fullName>
        </alternativeName>
        <alternativeName>
            <fullName evidence="1">Inosinicase</fullName>
        </alternativeName>
    </domain>
</protein>
<comment type="catalytic activity">
    <reaction evidence="1">
        <text>(6R)-10-formyltetrahydrofolate + 5-amino-1-(5-phospho-beta-D-ribosyl)imidazole-4-carboxamide = 5-formamido-1-(5-phospho-D-ribosyl)imidazole-4-carboxamide + (6S)-5,6,7,8-tetrahydrofolate</text>
        <dbReference type="Rhea" id="RHEA:22192"/>
        <dbReference type="ChEBI" id="CHEBI:57453"/>
        <dbReference type="ChEBI" id="CHEBI:58467"/>
        <dbReference type="ChEBI" id="CHEBI:58475"/>
        <dbReference type="ChEBI" id="CHEBI:195366"/>
        <dbReference type="EC" id="2.1.2.3"/>
    </reaction>
</comment>
<comment type="catalytic activity">
    <reaction evidence="1">
        <text>IMP + H2O = 5-formamido-1-(5-phospho-D-ribosyl)imidazole-4-carboxamide</text>
        <dbReference type="Rhea" id="RHEA:18445"/>
        <dbReference type="ChEBI" id="CHEBI:15377"/>
        <dbReference type="ChEBI" id="CHEBI:58053"/>
        <dbReference type="ChEBI" id="CHEBI:58467"/>
        <dbReference type="EC" id="3.5.4.10"/>
    </reaction>
</comment>
<comment type="pathway">
    <text evidence="1">Purine metabolism; IMP biosynthesis via de novo pathway; 5-formamido-1-(5-phospho-D-ribosyl)imidazole-4-carboxamide from 5-amino-1-(5-phospho-D-ribosyl)imidazole-4-carboxamide (10-formyl THF route): step 1/1.</text>
</comment>
<comment type="pathway">
    <text evidence="1">Purine metabolism; IMP biosynthesis via de novo pathway; IMP from 5-formamido-1-(5-phospho-D-ribosyl)imidazole-4-carboxamide: step 1/1.</text>
</comment>
<comment type="domain">
    <text evidence="1">The IMP cyclohydrolase activity resides in the N-terminal region.</text>
</comment>
<comment type="similarity">
    <text evidence="1">Belongs to the PurH family.</text>
</comment>
<gene>
    <name evidence="1" type="primary">purH</name>
    <name type="ordered locus">YpAngola_A0465</name>
</gene>
<proteinExistence type="inferred from homology"/>
<reference key="1">
    <citation type="journal article" date="2010" name="J. Bacteriol.">
        <title>Genome sequence of the deep-rooted Yersinia pestis strain Angola reveals new insights into the evolution and pangenome of the plague bacterium.</title>
        <authorList>
            <person name="Eppinger M."/>
            <person name="Worsham P.L."/>
            <person name="Nikolich M.P."/>
            <person name="Riley D.R."/>
            <person name="Sebastian Y."/>
            <person name="Mou S."/>
            <person name="Achtman M."/>
            <person name="Lindler L.E."/>
            <person name="Ravel J."/>
        </authorList>
    </citation>
    <scope>NUCLEOTIDE SEQUENCE [LARGE SCALE GENOMIC DNA]</scope>
    <source>
        <strain>Angola</strain>
    </source>
</reference>